<keyword id="KW-0025">Alternative splicing</keyword>
<keyword id="KW-1015">Disulfide bond</keyword>
<keyword id="KW-0325">Glycoprotein</keyword>
<keyword id="KW-0326">Glycosidase</keyword>
<keyword id="KW-0378">Hydrolase</keyword>
<keyword id="KW-1185">Reference proteome</keyword>
<keyword id="KW-0732">Signal</keyword>
<gene>
    <name type="primary">BGLU30</name>
    <name type="ordered locus">Os09g0491100</name>
    <name type="ordered locus">LOC_Os09g31430</name>
</gene>
<organism>
    <name type="scientific">Oryza sativa subsp. japonica</name>
    <name type="common">Rice</name>
    <dbReference type="NCBI Taxonomy" id="39947"/>
    <lineage>
        <taxon>Eukaryota</taxon>
        <taxon>Viridiplantae</taxon>
        <taxon>Streptophyta</taxon>
        <taxon>Embryophyta</taxon>
        <taxon>Tracheophyta</taxon>
        <taxon>Spermatophyta</taxon>
        <taxon>Magnoliopsida</taxon>
        <taxon>Liliopsida</taxon>
        <taxon>Poales</taxon>
        <taxon>Poaceae</taxon>
        <taxon>BOP clade</taxon>
        <taxon>Oryzoideae</taxon>
        <taxon>Oryzeae</taxon>
        <taxon>Oryzinae</taxon>
        <taxon>Oryza</taxon>
        <taxon>Oryza sativa</taxon>
    </lineage>
</organism>
<dbReference type="EC" id="3.2.1.21" evidence="2"/>
<dbReference type="EMBL" id="AY056828">
    <property type="protein sequence ID" value="AAL14713.1"/>
    <property type="molecule type" value="mRNA"/>
</dbReference>
<dbReference type="EMBL" id="AP008215">
    <property type="protein sequence ID" value="BAF25453.1"/>
    <property type="molecule type" value="Genomic_DNA"/>
</dbReference>
<dbReference type="EMBL" id="AP014965">
    <property type="protein sequence ID" value="BAT08727.1"/>
    <property type="molecule type" value="Genomic_DNA"/>
</dbReference>
<dbReference type="EMBL" id="AK061340">
    <property type="status" value="NOT_ANNOTATED_CDS"/>
    <property type="molecule type" value="mRNA"/>
</dbReference>
<dbReference type="RefSeq" id="XP_015610659.1">
    <property type="nucleotide sequence ID" value="XM_015755173.1"/>
</dbReference>
<dbReference type="RefSeq" id="XP_015610660.1">
    <property type="nucleotide sequence ID" value="XM_015755174.1"/>
</dbReference>
<dbReference type="SMR" id="Q0J0N4"/>
<dbReference type="FunCoup" id="Q0J0N4">
    <property type="interactions" value="499"/>
</dbReference>
<dbReference type="STRING" id="39947.Q0J0N4"/>
<dbReference type="CAZy" id="GH1">
    <property type="family name" value="Glycoside Hydrolase Family 1"/>
</dbReference>
<dbReference type="GlyCosmos" id="Q0J0N4">
    <property type="glycosylation" value="5 sites, No reported glycans"/>
</dbReference>
<dbReference type="PaxDb" id="39947-Q0J0N4"/>
<dbReference type="EnsemblPlants" id="Os09t0491100-01">
    <molecule id="Q0J0N4-1"/>
    <property type="protein sequence ID" value="Os09t0491100-01"/>
    <property type="gene ID" value="Os09g0491100"/>
</dbReference>
<dbReference type="Gramene" id="Os09t0491100-01">
    <molecule id="Q0J0N4-1"/>
    <property type="protein sequence ID" value="Os09t0491100-01"/>
    <property type="gene ID" value="Os09g0491100"/>
</dbReference>
<dbReference type="KEGG" id="dosa:Os09g0491100"/>
<dbReference type="eggNOG" id="KOG0626">
    <property type="taxonomic scope" value="Eukaryota"/>
</dbReference>
<dbReference type="InParanoid" id="Q0J0N4"/>
<dbReference type="OMA" id="DVANDMY"/>
<dbReference type="OrthoDB" id="65569at2759"/>
<dbReference type="Proteomes" id="UP000000763">
    <property type="component" value="Chromosome 9"/>
</dbReference>
<dbReference type="Proteomes" id="UP000059680">
    <property type="component" value="Chromosome 9"/>
</dbReference>
<dbReference type="ExpressionAtlas" id="Q0J0N4">
    <property type="expression patterns" value="baseline and differential"/>
</dbReference>
<dbReference type="GO" id="GO:0033907">
    <property type="term" value="F:beta-D-fucosidase activity"/>
    <property type="evidence" value="ECO:0007669"/>
    <property type="project" value="UniProtKB-ARBA"/>
</dbReference>
<dbReference type="GO" id="GO:0004565">
    <property type="term" value="F:beta-galactosidase activity"/>
    <property type="evidence" value="ECO:0007669"/>
    <property type="project" value="UniProtKB-ARBA"/>
</dbReference>
<dbReference type="GO" id="GO:0008422">
    <property type="term" value="F:beta-glucosidase activity"/>
    <property type="evidence" value="ECO:0000318"/>
    <property type="project" value="GO_Central"/>
</dbReference>
<dbReference type="GO" id="GO:0005975">
    <property type="term" value="P:carbohydrate metabolic process"/>
    <property type="evidence" value="ECO:0007669"/>
    <property type="project" value="InterPro"/>
</dbReference>
<dbReference type="FunFam" id="3.20.20.80:FF:000020">
    <property type="entry name" value="Beta-glucosidase 12"/>
    <property type="match status" value="1"/>
</dbReference>
<dbReference type="Gene3D" id="3.20.20.80">
    <property type="entry name" value="Glycosidases"/>
    <property type="match status" value="1"/>
</dbReference>
<dbReference type="InterPro" id="IPR001360">
    <property type="entry name" value="Glyco_hydro_1"/>
</dbReference>
<dbReference type="InterPro" id="IPR033132">
    <property type="entry name" value="Glyco_hydro_1_N_CS"/>
</dbReference>
<dbReference type="InterPro" id="IPR017853">
    <property type="entry name" value="Glycoside_hydrolase_SF"/>
</dbReference>
<dbReference type="PANTHER" id="PTHR10353:SF334">
    <property type="entry name" value="BETA-GLUCOSIDASE 29"/>
    <property type="match status" value="1"/>
</dbReference>
<dbReference type="PANTHER" id="PTHR10353">
    <property type="entry name" value="GLYCOSYL HYDROLASE"/>
    <property type="match status" value="1"/>
</dbReference>
<dbReference type="Pfam" id="PF00232">
    <property type="entry name" value="Glyco_hydro_1"/>
    <property type="match status" value="1"/>
</dbReference>
<dbReference type="PRINTS" id="PR00131">
    <property type="entry name" value="GLHYDRLASE1"/>
</dbReference>
<dbReference type="SUPFAM" id="SSF51445">
    <property type="entry name" value="(Trans)glycosidases"/>
    <property type="match status" value="1"/>
</dbReference>
<dbReference type="PROSITE" id="PS00653">
    <property type="entry name" value="GLYCOSYL_HYDROL_F1_2"/>
    <property type="match status" value="1"/>
</dbReference>
<proteinExistence type="evidence at transcript level"/>
<name>BGL30_ORYSJ</name>
<evidence type="ECO:0000250" key="1">
    <source>
        <dbReference type="UniProtKB" id="Q1XH05"/>
    </source>
</evidence>
<evidence type="ECO:0000250" key="2">
    <source>
        <dbReference type="UniProtKB" id="Q75I94"/>
    </source>
</evidence>
<evidence type="ECO:0000250" key="3">
    <source>
        <dbReference type="UniProtKB" id="Q7XSK0"/>
    </source>
</evidence>
<evidence type="ECO:0000250" key="4">
    <source>
        <dbReference type="UniProtKB" id="Q9SPP9"/>
    </source>
</evidence>
<evidence type="ECO:0000255" key="5"/>
<evidence type="ECO:0000255" key="6">
    <source>
        <dbReference type="PROSITE-ProRule" id="PRU00498"/>
    </source>
</evidence>
<evidence type="ECO:0000303" key="7">
    <source>
    </source>
</evidence>
<evidence type="ECO:0000305" key="8"/>
<feature type="signal peptide" evidence="5">
    <location>
        <begin position="1"/>
        <end position="25"/>
    </location>
</feature>
<feature type="chain" id="PRO_0000390347" description="Beta-glucosidase 30">
    <location>
        <begin position="26"/>
        <end position="500"/>
    </location>
</feature>
<feature type="active site" description="Proton donor" evidence="3">
    <location>
        <position position="195"/>
    </location>
</feature>
<feature type="active site" description="Nucleophile" evidence="3">
    <location>
        <position position="409"/>
    </location>
</feature>
<feature type="binding site" evidence="3">
    <location>
        <position position="46"/>
    </location>
    <ligand>
        <name>a beta-D-glucoside</name>
        <dbReference type="ChEBI" id="CHEBI:22798"/>
    </ligand>
</feature>
<feature type="binding site" evidence="3">
    <location>
        <position position="149"/>
    </location>
    <ligand>
        <name>a beta-D-glucoside</name>
        <dbReference type="ChEBI" id="CHEBI:22798"/>
    </ligand>
</feature>
<feature type="binding site" evidence="3">
    <location>
        <begin position="194"/>
        <end position="195"/>
    </location>
    <ligand>
        <name>a beta-D-glucoside</name>
        <dbReference type="ChEBI" id="CHEBI:22798"/>
    </ligand>
</feature>
<feature type="binding site" evidence="3">
    <location>
        <position position="338"/>
    </location>
    <ligand>
        <name>a beta-D-glucoside</name>
        <dbReference type="ChEBI" id="CHEBI:22798"/>
    </ligand>
</feature>
<feature type="binding site" evidence="4">
    <location>
        <position position="409"/>
    </location>
    <ligand>
        <name>a beta-D-glucoside</name>
        <dbReference type="ChEBI" id="CHEBI:22798"/>
    </ligand>
</feature>
<feature type="binding site" evidence="3">
    <location>
        <position position="456"/>
    </location>
    <ligand>
        <name>a beta-D-glucoside</name>
        <dbReference type="ChEBI" id="CHEBI:22798"/>
    </ligand>
</feature>
<feature type="binding site" evidence="3">
    <location>
        <begin position="463"/>
        <end position="464"/>
    </location>
    <ligand>
        <name>a beta-D-glucoside</name>
        <dbReference type="ChEBI" id="CHEBI:22798"/>
    </ligand>
</feature>
<feature type="binding site" evidence="1">
    <location>
        <position position="472"/>
    </location>
    <ligand>
        <name>a beta-D-glucoside</name>
        <dbReference type="ChEBI" id="CHEBI:22798"/>
    </ligand>
</feature>
<feature type="glycosylation site" description="N-linked (GlcNAc...) asparagine" evidence="6">
    <location>
        <position position="63"/>
    </location>
</feature>
<feature type="glycosylation site" description="N-linked (GlcNAc...) asparagine" evidence="6">
    <location>
        <position position="114"/>
    </location>
</feature>
<feature type="glycosylation site" description="N-linked (GlcNAc...) asparagine" evidence="6">
    <location>
        <position position="363"/>
    </location>
</feature>
<feature type="glycosylation site" description="N-linked (GlcNAc...) asparagine" evidence="6">
    <location>
        <position position="416"/>
    </location>
</feature>
<feature type="glycosylation site" description="N-linked (GlcNAc...) asparagine" evidence="6">
    <location>
        <position position="417"/>
    </location>
</feature>
<feature type="disulfide bond" evidence="3">
    <location>
        <begin position="214"/>
        <end position="222"/>
    </location>
</feature>
<feature type="splice variant" id="VSP_038512" description="In isoform 2." evidence="7">
    <original>EFTPIFFNYPPGLRELLLYTKRRYNNPTIYVTENGIDEGNNSTLPEALKDGHRIEFHSKH</original>
    <variation>VSVSSSSTPRGDTTTRPSMLQKTASMRVTTAHCQRRSRMDTGSSSTQSTCSSSTTPSRMG</variation>
    <location>
        <begin position="377"/>
        <end position="436"/>
    </location>
</feature>
<feature type="splice variant" id="VSP_038513" description="In isoform 2." evidence="7">
    <location>
        <begin position="437"/>
        <end position="500"/>
    </location>
</feature>
<feature type="sequence conflict" description="In Ref. 1; AAL14713." evidence="8" ref="1">
    <original>T</original>
    <variation>F</variation>
    <location>
        <position position="191"/>
    </location>
</feature>
<comment type="catalytic activity">
    <reaction evidence="2">
        <text>Hydrolysis of terminal, non-reducing beta-D-glucosyl residues with release of beta-D-glucose.</text>
        <dbReference type="EC" id="3.2.1.21"/>
    </reaction>
</comment>
<comment type="alternative products">
    <event type="alternative splicing"/>
    <isoform>
        <id>Q0J0N4-1</id>
        <name>1</name>
        <sequence type="displayed"/>
    </isoform>
    <isoform>
        <id>Q0J0N4-2</id>
        <name>2</name>
        <sequence type="described" ref="VSP_038512 VSP_038513"/>
    </isoform>
</comment>
<comment type="similarity">
    <text evidence="8">Belongs to the glycosyl hydrolase 1 family.</text>
</comment>
<sequence length="500" mass="57388">MGIRMGRRLLFTLFLGALFCNGVYAKFTRYSFPKDFIFGTGSAAYQYEGAYKEGGKGPSVWDNFTHIPGKILNNDNGDVANDFYHRYKEDVSLLKDMNMDAFRFSIAWTRILPNGSLSGGINKEGVAFYNSLINDVIAKGMIPFVTIFHWDTPLALESKYGGFLSEDIVKEYVDFAEVCFREFGDRVKYWTTFNEPFTYSAYGYGKGVFAPGRCSSYVSKSCGVGDSSREPYLVAHHIHLSHAAAVQLYRTKYQPTQKGQIGMVVVTHWFVPYDNSDADRGAVQRSLDFIYGWFMDPIVHGDYPGTMRGWLGNRLPEFTPEQSAMVKGSYDFIGVNYYTTYYAKSIPPPNSNELSYDLDNRANTTGFRNGKPIGPQEFTPIFFNYPPGLRELLLYTKRRYNNPTIYVTENGIDEGNNSTLPEALKDGHRIEFHSKHLQFVNHAIKNGVNVKGYFTWTFMDCFEWGDGYLDRFGLIYVDRKTLKRYRKESSYWIEDFLKRH</sequence>
<reference key="1">
    <citation type="submission" date="2001-09" db="EMBL/GenBank/DDBJ databases">
        <title>Beta-glucosidase isozyme expression in rice.</title>
        <authorList>
            <person name="Opassiri R."/>
            <person name="Ketudat Cairns J.R."/>
            <person name="Vichitphan S."/>
            <person name="Esen A."/>
        </authorList>
    </citation>
    <scope>NUCLEOTIDE SEQUENCE [MRNA]</scope>
    <source>
        <strain>cv. Orion</strain>
    </source>
</reference>
<reference key="2">
    <citation type="journal article" date="2005" name="Nature">
        <title>The map-based sequence of the rice genome.</title>
        <authorList>
            <consortium name="International rice genome sequencing project (IRGSP)"/>
        </authorList>
    </citation>
    <scope>NUCLEOTIDE SEQUENCE [LARGE SCALE GENOMIC DNA]</scope>
    <source>
        <strain>cv. Nipponbare</strain>
    </source>
</reference>
<reference key="3">
    <citation type="journal article" date="2008" name="Nucleic Acids Res.">
        <title>The rice annotation project database (RAP-DB): 2008 update.</title>
        <authorList>
            <consortium name="The rice annotation project (RAP)"/>
        </authorList>
    </citation>
    <scope>GENOME REANNOTATION</scope>
    <source>
        <strain>cv. Nipponbare</strain>
    </source>
</reference>
<reference key="4">
    <citation type="journal article" date="2013" name="Rice">
        <title>Improvement of the Oryza sativa Nipponbare reference genome using next generation sequence and optical map data.</title>
        <authorList>
            <person name="Kawahara Y."/>
            <person name="de la Bastide M."/>
            <person name="Hamilton J.P."/>
            <person name="Kanamori H."/>
            <person name="McCombie W.R."/>
            <person name="Ouyang S."/>
            <person name="Schwartz D.C."/>
            <person name="Tanaka T."/>
            <person name="Wu J."/>
            <person name="Zhou S."/>
            <person name="Childs K.L."/>
            <person name="Davidson R.M."/>
            <person name="Lin H."/>
            <person name="Quesada-Ocampo L."/>
            <person name="Vaillancourt B."/>
            <person name="Sakai H."/>
            <person name="Lee S.S."/>
            <person name="Kim J."/>
            <person name="Numa H."/>
            <person name="Itoh T."/>
            <person name="Buell C.R."/>
            <person name="Matsumoto T."/>
        </authorList>
    </citation>
    <scope>GENOME REANNOTATION</scope>
    <source>
        <strain>cv. Nipponbare</strain>
    </source>
</reference>
<reference key="5">
    <citation type="journal article" date="2003" name="Science">
        <title>Collection, mapping, and annotation of over 28,000 cDNA clones from japonica rice.</title>
        <authorList>
            <consortium name="The rice full-length cDNA consortium"/>
        </authorList>
    </citation>
    <scope>NUCLEOTIDE SEQUENCE [LARGE SCALE MRNA] OF 135-500 (ISOFORM 2)</scope>
    <source>
        <strain>cv. Nipponbare</strain>
    </source>
</reference>
<reference key="6">
    <citation type="journal article" date="2006" name="BMC Plant Biol.">
        <title>Analysis of rice glycosyl hydrolase family 1 and expression of Os4bglu12 beta-glucosidase.</title>
        <authorList>
            <person name="Opassiri R."/>
            <person name="Pomthong B."/>
            <person name="Onkoksoong T."/>
            <person name="Akiyama T."/>
            <person name="Esen A."/>
            <person name="Ketudat Cairns J.R."/>
        </authorList>
    </citation>
    <scope>GENE FAMILY</scope>
    <scope>NOMENCLATURE</scope>
</reference>
<protein>
    <recommendedName>
        <fullName>Beta-glucosidase 30</fullName>
        <shortName>Os9bglu30</shortName>
        <ecNumber evidence="2">3.2.1.21</ecNumber>
    </recommendedName>
</protein>
<accession>Q0J0N4</accession>
<accession>A0A0P0XPL4</accession>
<accession>Q93ZK6</accession>